<gene>
    <name evidence="1" type="primary">dnaJ</name>
    <name type="ordered locus">SeSA_A0014</name>
</gene>
<organism>
    <name type="scientific">Salmonella schwarzengrund (strain CVM19633)</name>
    <dbReference type="NCBI Taxonomy" id="439843"/>
    <lineage>
        <taxon>Bacteria</taxon>
        <taxon>Pseudomonadati</taxon>
        <taxon>Pseudomonadota</taxon>
        <taxon>Gammaproteobacteria</taxon>
        <taxon>Enterobacterales</taxon>
        <taxon>Enterobacteriaceae</taxon>
        <taxon>Salmonella</taxon>
    </lineage>
</organism>
<comment type="function">
    <text evidence="1">Participates actively in the response to hyperosmotic and heat shock by preventing the aggregation of stress-denatured proteins and by disaggregating proteins, also in an autonomous, DnaK-independent fashion. Unfolded proteins bind initially to DnaJ; upon interaction with the DnaJ-bound protein, DnaK hydrolyzes its bound ATP, resulting in the formation of a stable complex. GrpE releases ADP from DnaK; ATP binding to DnaK triggers the release of the substrate protein, thus completing the reaction cycle. Several rounds of ATP-dependent interactions between DnaJ, DnaK and GrpE are required for fully efficient folding. Also involved, together with DnaK and GrpE, in the DNA replication of plasmids through activation of initiation proteins.</text>
</comment>
<comment type="cofactor">
    <cofactor evidence="1">
        <name>Zn(2+)</name>
        <dbReference type="ChEBI" id="CHEBI:29105"/>
    </cofactor>
    <text evidence="1">Binds 2 Zn(2+) ions per monomer.</text>
</comment>
<comment type="subunit">
    <text evidence="1">Homodimer.</text>
</comment>
<comment type="subcellular location">
    <subcellularLocation>
        <location evidence="1">Cytoplasm</location>
    </subcellularLocation>
</comment>
<comment type="domain">
    <text evidence="1">The J domain is necessary and sufficient to stimulate DnaK ATPase activity. Zinc center 1 plays an important role in the autonomous, DnaK-independent chaperone activity of DnaJ. Zinc center 2 is essential for interaction with DnaK and for DnaJ activity.</text>
</comment>
<comment type="similarity">
    <text evidence="1">Belongs to the DnaJ family.</text>
</comment>
<accession>B4TVZ6</accession>
<name>DNAJ_SALSV</name>
<keyword id="KW-0143">Chaperone</keyword>
<keyword id="KW-0963">Cytoplasm</keyword>
<keyword id="KW-0235">DNA replication</keyword>
<keyword id="KW-0479">Metal-binding</keyword>
<keyword id="KW-0677">Repeat</keyword>
<keyword id="KW-0346">Stress response</keyword>
<keyword id="KW-0862">Zinc</keyword>
<keyword id="KW-0863">Zinc-finger</keyword>
<protein>
    <recommendedName>
        <fullName evidence="1">Chaperone protein DnaJ</fullName>
    </recommendedName>
</protein>
<dbReference type="EMBL" id="CP001127">
    <property type="protein sequence ID" value="ACF88692.1"/>
    <property type="molecule type" value="Genomic_DNA"/>
</dbReference>
<dbReference type="RefSeq" id="WP_001119009.1">
    <property type="nucleotide sequence ID" value="NC_011094.1"/>
</dbReference>
<dbReference type="SMR" id="B4TVZ6"/>
<dbReference type="KEGG" id="sew:SeSA_A0014"/>
<dbReference type="HOGENOM" id="CLU_017633_0_7_6"/>
<dbReference type="Proteomes" id="UP000001865">
    <property type="component" value="Chromosome"/>
</dbReference>
<dbReference type="GO" id="GO:0005737">
    <property type="term" value="C:cytoplasm"/>
    <property type="evidence" value="ECO:0007669"/>
    <property type="project" value="UniProtKB-SubCell"/>
</dbReference>
<dbReference type="GO" id="GO:0005524">
    <property type="term" value="F:ATP binding"/>
    <property type="evidence" value="ECO:0007669"/>
    <property type="project" value="InterPro"/>
</dbReference>
<dbReference type="GO" id="GO:0031072">
    <property type="term" value="F:heat shock protein binding"/>
    <property type="evidence" value="ECO:0007669"/>
    <property type="project" value="InterPro"/>
</dbReference>
<dbReference type="GO" id="GO:0051082">
    <property type="term" value="F:unfolded protein binding"/>
    <property type="evidence" value="ECO:0007669"/>
    <property type="project" value="UniProtKB-UniRule"/>
</dbReference>
<dbReference type="GO" id="GO:0008270">
    <property type="term" value="F:zinc ion binding"/>
    <property type="evidence" value="ECO:0007669"/>
    <property type="project" value="UniProtKB-UniRule"/>
</dbReference>
<dbReference type="GO" id="GO:0051085">
    <property type="term" value="P:chaperone cofactor-dependent protein refolding"/>
    <property type="evidence" value="ECO:0007669"/>
    <property type="project" value="TreeGrafter"/>
</dbReference>
<dbReference type="GO" id="GO:0006260">
    <property type="term" value="P:DNA replication"/>
    <property type="evidence" value="ECO:0007669"/>
    <property type="project" value="UniProtKB-KW"/>
</dbReference>
<dbReference type="GO" id="GO:0042026">
    <property type="term" value="P:protein refolding"/>
    <property type="evidence" value="ECO:0007669"/>
    <property type="project" value="TreeGrafter"/>
</dbReference>
<dbReference type="GO" id="GO:0009408">
    <property type="term" value="P:response to heat"/>
    <property type="evidence" value="ECO:0007669"/>
    <property type="project" value="InterPro"/>
</dbReference>
<dbReference type="CDD" id="cd06257">
    <property type="entry name" value="DnaJ"/>
    <property type="match status" value="1"/>
</dbReference>
<dbReference type="CDD" id="cd10747">
    <property type="entry name" value="DnaJ_C"/>
    <property type="match status" value="1"/>
</dbReference>
<dbReference type="CDD" id="cd10719">
    <property type="entry name" value="DnaJ_zf"/>
    <property type="match status" value="1"/>
</dbReference>
<dbReference type="FunFam" id="1.10.287.110:FF:000003">
    <property type="entry name" value="Molecular chaperone DnaJ"/>
    <property type="match status" value="1"/>
</dbReference>
<dbReference type="FunFam" id="2.10.230.10:FF:000002">
    <property type="entry name" value="Molecular chaperone DnaJ"/>
    <property type="match status" value="1"/>
</dbReference>
<dbReference type="FunFam" id="2.60.260.20:FF:000004">
    <property type="entry name" value="Molecular chaperone DnaJ"/>
    <property type="match status" value="1"/>
</dbReference>
<dbReference type="Gene3D" id="1.10.287.110">
    <property type="entry name" value="DnaJ domain"/>
    <property type="match status" value="1"/>
</dbReference>
<dbReference type="Gene3D" id="2.10.230.10">
    <property type="entry name" value="Heat shock protein DnaJ, cysteine-rich domain"/>
    <property type="match status" value="1"/>
</dbReference>
<dbReference type="Gene3D" id="2.60.260.20">
    <property type="entry name" value="Urease metallochaperone UreE, N-terminal domain"/>
    <property type="match status" value="2"/>
</dbReference>
<dbReference type="HAMAP" id="MF_01152">
    <property type="entry name" value="DnaJ"/>
    <property type="match status" value="1"/>
</dbReference>
<dbReference type="InterPro" id="IPR012724">
    <property type="entry name" value="DnaJ"/>
</dbReference>
<dbReference type="InterPro" id="IPR002939">
    <property type="entry name" value="DnaJ_C"/>
</dbReference>
<dbReference type="InterPro" id="IPR001623">
    <property type="entry name" value="DnaJ_domain"/>
</dbReference>
<dbReference type="InterPro" id="IPR018253">
    <property type="entry name" value="DnaJ_domain_CS"/>
</dbReference>
<dbReference type="InterPro" id="IPR008971">
    <property type="entry name" value="HSP40/DnaJ_pept-bd"/>
</dbReference>
<dbReference type="InterPro" id="IPR001305">
    <property type="entry name" value="HSP_DnaJ_Cys-rich_dom"/>
</dbReference>
<dbReference type="InterPro" id="IPR036410">
    <property type="entry name" value="HSP_DnaJ_Cys-rich_dom_sf"/>
</dbReference>
<dbReference type="InterPro" id="IPR036869">
    <property type="entry name" value="J_dom_sf"/>
</dbReference>
<dbReference type="NCBIfam" id="TIGR02349">
    <property type="entry name" value="DnaJ_bact"/>
    <property type="match status" value="1"/>
</dbReference>
<dbReference type="NCBIfam" id="NF008035">
    <property type="entry name" value="PRK10767.1"/>
    <property type="match status" value="1"/>
</dbReference>
<dbReference type="PANTHER" id="PTHR43096:SF48">
    <property type="entry name" value="CHAPERONE PROTEIN DNAJ"/>
    <property type="match status" value="1"/>
</dbReference>
<dbReference type="PANTHER" id="PTHR43096">
    <property type="entry name" value="DNAJ HOMOLOG 1, MITOCHONDRIAL-RELATED"/>
    <property type="match status" value="1"/>
</dbReference>
<dbReference type="Pfam" id="PF00226">
    <property type="entry name" value="DnaJ"/>
    <property type="match status" value="1"/>
</dbReference>
<dbReference type="Pfam" id="PF01556">
    <property type="entry name" value="DnaJ_C"/>
    <property type="match status" value="1"/>
</dbReference>
<dbReference type="Pfam" id="PF00684">
    <property type="entry name" value="DnaJ_CXXCXGXG"/>
    <property type="match status" value="1"/>
</dbReference>
<dbReference type="PRINTS" id="PR00625">
    <property type="entry name" value="JDOMAIN"/>
</dbReference>
<dbReference type="SMART" id="SM00271">
    <property type="entry name" value="DnaJ"/>
    <property type="match status" value="1"/>
</dbReference>
<dbReference type="SUPFAM" id="SSF46565">
    <property type="entry name" value="Chaperone J-domain"/>
    <property type="match status" value="1"/>
</dbReference>
<dbReference type="SUPFAM" id="SSF57938">
    <property type="entry name" value="DnaJ/Hsp40 cysteine-rich domain"/>
    <property type="match status" value="1"/>
</dbReference>
<dbReference type="SUPFAM" id="SSF49493">
    <property type="entry name" value="HSP40/DnaJ peptide-binding domain"/>
    <property type="match status" value="2"/>
</dbReference>
<dbReference type="PROSITE" id="PS00636">
    <property type="entry name" value="DNAJ_1"/>
    <property type="match status" value="1"/>
</dbReference>
<dbReference type="PROSITE" id="PS50076">
    <property type="entry name" value="DNAJ_2"/>
    <property type="match status" value="1"/>
</dbReference>
<dbReference type="PROSITE" id="PS51188">
    <property type="entry name" value="ZF_CR"/>
    <property type="match status" value="1"/>
</dbReference>
<sequence length="379" mass="41313">MAKRDYYEILGVSKTAEEREIKKAYKRLAMKYHPDRNQGDKEAEAKFKEIKEAYEVLTDAQKRAAYDQYGHAAFEQGGMGGGFGGGFNGGADFSDIFGDVFGDIFGGGRGRQRAARGADLRYNMDLTLEEAVRGVTKEIRIPTLEECDVCHGSGAKAGTQPQTCPTCHGSGQVQMRQGFFAVQQTCPHCQGRGTLIKDPCHKCHGHGRVEKSKTLSVKIPAGVDTGDRIRLAGEGEAGEHGAPAGDLYVQVQVKQHPIFEREGNNLYCEVPINFAMAALGGEIEVPTLDGRVMLKVPSETQTGKLFRMRGKGVKSVRGGAQGDLLCRVVVETPVGLSEKQKQLLKDLQESFGGPTGEKNSPRSKSFFDGVKKFFDDLTR</sequence>
<proteinExistence type="inferred from homology"/>
<reference key="1">
    <citation type="journal article" date="2011" name="J. Bacteriol.">
        <title>Comparative genomics of 28 Salmonella enterica isolates: evidence for CRISPR-mediated adaptive sublineage evolution.</title>
        <authorList>
            <person name="Fricke W.F."/>
            <person name="Mammel M.K."/>
            <person name="McDermott P.F."/>
            <person name="Tartera C."/>
            <person name="White D.G."/>
            <person name="Leclerc J.E."/>
            <person name="Ravel J."/>
            <person name="Cebula T.A."/>
        </authorList>
    </citation>
    <scope>NUCLEOTIDE SEQUENCE [LARGE SCALE GENOMIC DNA]</scope>
    <source>
        <strain>CVM19633</strain>
    </source>
</reference>
<feature type="chain" id="PRO_1000137726" description="Chaperone protein DnaJ">
    <location>
        <begin position="1"/>
        <end position="379"/>
    </location>
</feature>
<feature type="domain" description="J" evidence="1">
    <location>
        <begin position="5"/>
        <end position="70"/>
    </location>
</feature>
<feature type="repeat" description="CXXCXGXG motif">
    <location>
        <begin position="147"/>
        <end position="154"/>
    </location>
</feature>
<feature type="repeat" description="CXXCXGXG motif">
    <location>
        <begin position="164"/>
        <end position="171"/>
    </location>
</feature>
<feature type="repeat" description="CXXCXGXG motif">
    <location>
        <begin position="186"/>
        <end position="193"/>
    </location>
</feature>
<feature type="repeat" description="CXXCXGXG motif">
    <location>
        <begin position="200"/>
        <end position="207"/>
    </location>
</feature>
<feature type="zinc finger region" description="CR-type" evidence="1">
    <location>
        <begin position="134"/>
        <end position="212"/>
    </location>
</feature>
<feature type="binding site" evidence="1">
    <location>
        <position position="147"/>
    </location>
    <ligand>
        <name>Zn(2+)</name>
        <dbReference type="ChEBI" id="CHEBI:29105"/>
        <label>1</label>
    </ligand>
</feature>
<feature type="binding site" evidence="1">
    <location>
        <position position="150"/>
    </location>
    <ligand>
        <name>Zn(2+)</name>
        <dbReference type="ChEBI" id="CHEBI:29105"/>
        <label>1</label>
    </ligand>
</feature>
<feature type="binding site" evidence="1">
    <location>
        <position position="164"/>
    </location>
    <ligand>
        <name>Zn(2+)</name>
        <dbReference type="ChEBI" id="CHEBI:29105"/>
        <label>2</label>
    </ligand>
</feature>
<feature type="binding site" evidence="1">
    <location>
        <position position="167"/>
    </location>
    <ligand>
        <name>Zn(2+)</name>
        <dbReference type="ChEBI" id="CHEBI:29105"/>
        <label>2</label>
    </ligand>
</feature>
<feature type="binding site" evidence="1">
    <location>
        <position position="186"/>
    </location>
    <ligand>
        <name>Zn(2+)</name>
        <dbReference type="ChEBI" id="CHEBI:29105"/>
        <label>2</label>
    </ligand>
</feature>
<feature type="binding site" evidence="1">
    <location>
        <position position="189"/>
    </location>
    <ligand>
        <name>Zn(2+)</name>
        <dbReference type="ChEBI" id="CHEBI:29105"/>
        <label>2</label>
    </ligand>
</feature>
<feature type="binding site" evidence="1">
    <location>
        <position position="200"/>
    </location>
    <ligand>
        <name>Zn(2+)</name>
        <dbReference type="ChEBI" id="CHEBI:29105"/>
        <label>1</label>
    </ligand>
</feature>
<feature type="binding site" evidence="1">
    <location>
        <position position="203"/>
    </location>
    <ligand>
        <name>Zn(2+)</name>
        <dbReference type="ChEBI" id="CHEBI:29105"/>
        <label>1</label>
    </ligand>
</feature>
<evidence type="ECO:0000255" key="1">
    <source>
        <dbReference type="HAMAP-Rule" id="MF_01152"/>
    </source>
</evidence>